<sequence length="341" mass="37003">MSTNIAINGMGRIGRMVLRIALQNKNLNVVAINASYPPETIAHLINYDTTHGKYNLKVEPIENGLQVGDHKIKLVADRNPENLPWKELDIDIAIDATGKFNHGDKAIAHIKAGAKKVLLTGPSKGGHVQMVVKGVNDDQLDIEAFDIFSNASCTTNCIGPVAKVLNNQFGIVNGLMTTVHAITNDQKNIDNPHKDLRRARSCNESIIPTSTGAAKALKEVLPELEGKLHGMALRVPTKNVSLVDLVVDLEKEVTAEEVNQAFENAGLEGIIEVEHQPLVSVDFNTNPHSAIIDAKSTMVMSGNKVKVIAWYDNEWGYSNRVVDVAEQIGALLTSKETVSAS</sequence>
<accession>Q6GG19</accession>
<comment type="function">
    <text evidence="2">Catalyzes the oxidative phosphorylation of glyceraldehyde 3-phosphate (G3P) to 1,3-bisphosphoglycerate (BPG) using the cofactor NAD. The first reaction step involves the formation of a hemiacetal intermediate between G3P and a cysteine residue, and this hemiacetal intermediate is then oxidized to a thioester, with concomitant reduction of NAD to NADH. The reduced NADH is then exchanged with the second NAD, and the thioester is attacked by a nucleophilic inorganic phosphate to produce BPG.</text>
</comment>
<comment type="catalytic activity">
    <reaction evidence="2">
        <text>D-glyceraldehyde 3-phosphate + phosphate + NAD(+) = (2R)-3-phospho-glyceroyl phosphate + NADH + H(+)</text>
        <dbReference type="Rhea" id="RHEA:10300"/>
        <dbReference type="ChEBI" id="CHEBI:15378"/>
        <dbReference type="ChEBI" id="CHEBI:43474"/>
        <dbReference type="ChEBI" id="CHEBI:57540"/>
        <dbReference type="ChEBI" id="CHEBI:57604"/>
        <dbReference type="ChEBI" id="CHEBI:57945"/>
        <dbReference type="ChEBI" id="CHEBI:59776"/>
        <dbReference type="EC" id="1.2.1.12"/>
    </reaction>
</comment>
<comment type="pathway">
    <text evidence="3">Carbohydrate degradation; glycolysis; pyruvate from D-glyceraldehyde 3-phosphate: step 1/5.</text>
</comment>
<comment type="subunit">
    <text evidence="2">Homotetramer.</text>
</comment>
<comment type="subcellular location">
    <subcellularLocation>
        <location evidence="3">Cytoplasm</location>
    </subcellularLocation>
</comment>
<comment type="similarity">
    <text evidence="3">Belongs to the glyceraldehyde-3-phosphate dehydrogenase family.</text>
</comment>
<organism>
    <name type="scientific">Staphylococcus aureus (strain MRSA252)</name>
    <dbReference type="NCBI Taxonomy" id="282458"/>
    <lineage>
        <taxon>Bacteria</taxon>
        <taxon>Bacillati</taxon>
        <taxon>Bacillota</taxon>
        <taxon>Bacilli</taxon>
        <taxon>Bacillales</taxon>
        <taxon>Staphylococcaceae</taxon>
        <taxon>Staphylococcus</taxon>
    </lineage>
</organism>
<reference key="1">
    <citation type="journal article" date="2004" name="Proc. Natl. Acad. Sci. U.S.A.">
        <title>Complete genomes of two clinical Staphylococcus aureus strains: evidence for the rapid evolution of virulence and drug resistance.</title>
        <authorList>
            <person name="Holden M.T.G."/>
            <person name="Feil E.J."/>
            <person name="Lindsay J.A."/>
            <person name="Peacock S.J."/>
            <person name="Day N.P.J."/>
            <person name="Enright M.C."/>
            <person name="Foster T.J."/>
            <person name="Moore C.E."/>
            <person name="Hurst L."/>
            <person name="Atkin R."/>
            <person name="Barron A."/>
            <person name="Bason N."/>
            <person name="Bentley S.D."/>
            <person name="Chillingworth C."/>
            <person name="Chillingworth T."/>
            <person name="Churcher C."/>
            <person name="Clark L."/>
            <person name="Corton C."/>
            <person name="Cronin A."/>
            <person name="Doggett J."/>
            <person name="Dowd L."/>
            <person name="Feltwell T."/>
            <person name="Hance Z."/>
            <person name="Harris B."/>
            <person name="Hauser H."/>
            <person name="Holroyd S."/>
            <person name="Jagels K."/>
            <person name="James K.D."/>
            <person name="Lennard N."/>
            <person name="Line A."/>
            <person name="Mayes R."/>
            <person name="Moule S."/>
            <person name="Mungall K."/>
            <person name="Ormond D."/>
            <person name="Quail M.A."/>
            <person name="Rabbinowitsch E."/>
            <person name="Rutherford K.M."/>
            <person name="Sanders M."/>
            <person name="Sharp S."/>
            <person name="Simmonds M."/>
            <person name="Stevens K."/>
            <person name="Whitehead S."/>
            <person name="Barrell B.G."/>
            <person name="Spratt B.G."/>
            <person name="Parkhill J."/>
        </authorList>
    </citation>
    <scope>NUCLEOTIDE SEQUENCE [LARGE SCALE GENOMIC DNA]</scope>
    <source>
        <strain>MRSA252</strain>
    </source>
</reference>
<gene>
    <name type="primary">gapA2</name>
    <name type="synonym">gapB</name>
    <name type="ordered locus">SAR1766</name>
</gene>
<name>G3P2_STAAR</name>
<evidence type="ECO:0000250" key="1">
    <source>
        <dbReference type="UniProtKB" id="P00362"/>
    </source>
</evidence>
<evidence type="ECO:0000250" key="2">
    <source>
        <dbReference type="UniProtKB" id="Q6GIL8"/>
    </source>
</evidence>
<evidence type="ECO:0000305" key="3"/>
<proteinExistence type="inferred from homology"/>
<feature type="chain" id="PRO_0000145694" description="Glyceraldehyde-3-phosphate dehydrogenase 2">
    <location>
        <begin position="1"/>
        <end position="341"/>
    </location>
</feature>
<feature type="active site" description="Nucleophile" evidence="2">
    <location>
        <position position="153"/>
    </location>
</feature>
<feature type="binding site" evidence="2">
    <location>
        <begin position="12"/>
        <end position="13"/>
    </location>
    <ligand>
        <name>NAD(+)</name>
        <dbReference type="ChEBI" id="CHEBI:57540"/>
    </ligand>
</feature>
<feature type="binding site" evidence="2">
    <location>
        <position position="78"/>
    </location>
    <ligand>
        <name>NAD(+)</name>
        <dbReference type="ChEBI" id="CHEBI:57540"/>
    </ligand>
</feature>
<feature type="binding site" evidence="2">
    <location>
        <position position="120"/>
    </location>
    <ligand>
        <name>NAD(+)</name>
        <dbReference type="ChEBI" id="CHEBI:57540"/>
    </ligand>
</feature>
<feature type="binding site" evidence="2">
    <location>
        <begin position="152"/>
        <end position="154"/>
    </location>
    <ligand>
        <name>D-glyceraldehyde 3-phosphate</name>
        <dbReference type="ChEBI" id="CHEBI:59776"/>
    </ligand>
</feature>
<feature type="binding site" evidence="2">
    <location>
        <position position="183"/>
    </location>
    <ligand>
        <name>D-glyceraldehyde 3-phosphate</name>
        <dbReference type="ChEBI" id="CHEBI:59776"/>
    </ligand>
</feature>
<feature type="binding site" evidence="2">
    <location>
        <position position="184"/>
    </location>
    <ligand>
        <name>NAD(+)</name>
        <dbReference type="ChEBI" id="CHEBI:57540"/>
    </ligand>
</feature>
<feature type="binding site" evidence="1">
    <location>
        <position position="198"/>
    </location>
    <ligand>
        <name>D-glyceraldehyde 3-phosphate</name>
        <dbReference type="ChEBI" id="CHEBI:59776"/>
    </ligand>
</feature>
<feature type="binding site" evidence="2">
    <location>
        <begin position="211"/>
        <end position="212"/>
    </location>
    <ligand>
        <name>D-glyceraldehyde 3-phosphate</name>
        <dbReference type="ChEBI" id="CHEBI:59776"/>
    </ligand>
</feature>
<feature type="binding site" evidence="2">
    <location>
        <position position="234"/>
    </location>
    <ligand>
        <name>D-glyceraldehyde 3-phosphate</name>
        <dbReference type="ChEBI" id="CHEBI:59776"/>
    </ligand>
</feature>
<feature type="binding site" evidence="2">
    <location>
        <position position="313"/>
    </location>
    <ligand>
        <name>NAD(+)</name>
        <dbReference type="ChEBI" id="CHEBI:57540"/>
    </ligand>
</feature>
<feature type="site" description="Activates thiol group during catalysis" evidence="2">
    <location>
        <position position="180"/>
    </location>
</feature>
<protein>
    <recommendedName>
        <fullName evidence="2">Glyceraldehyde-3-phosphate dehydrogenase 2</fullName>
        <shortName evidence="2">GAPDH 2</shortName>
        <ecNumber evidence="2">1.2.1.12</ecNumber>
    </recommendedName>
    <alternativeName>
        <fullName evidence="2">NAD-dependent glyceraldehyde-3-phosphate dehydrogenase</fullName>
    </alternativeName>
</protein>
<keyword id="KW-0963">Cytoplasm</keyword>
<keyword id="KW-0324">Glycolysis</keyword>
<keyword id="KW-0520">NAD</keyword>
<keyword id="KW-0547">Nucleotide-binding</keyword>
<keyword id="KW-0560">Oxidoreductase</keyword>
<dbReference type="EC" id="1.2.1.12" evidence="2"/>
<dbReference type="EMBL" id="BX571856">
    <property type="protein sequence ID" value="CAG40757.1"/>
    <property type="molecule type" value="Genomic_DNA"/>
</dbReference>
<dbReference type="SMR" id="Q6GG19"/>
<dbReference type="KEGG" id="sar:SAR1766"/>
<dbReference type="HOGENOM" id="CLU_030140_0_2_9"/>
<dbReference type="UniPathway" id="UPA00109">
    <property type="reaction ID" value="UER00184"/>
</dbReference>
<dbReference type="Proteomes" id="UP000000596">
    <property type="component" value="Chromosome"/>
</dbReference>
<dbReference type="GO" id="GO:0005737">
    <property type="term" value="C:cytoplasm"/>
    <property type="evidence" value="ECO:0007669"/>
    <property type="project" value="UniProtKB-SubCell"/>
</dbReference>
<dbReference type="GO" id="GO:0004365">
    <property type="term" value="F:glyceraldehyde-3-phosphate dehydrogenase (NAD+) (phosphorylating) activity"/>
    <property type="evidence" value="ECO:0000250"/>
    <property type="project" value="UniProtKB"/>
</dbReference>
<dbReference type="GO" id="GO:0051287">
    <property type="term" value="F:NAD binding"/>
    <property type="evidence" value="ECO:0000250"/>
    <property type="project" value="UniProtKB"/>
</dbReference>
<dbReference type="GO" id="GO:0050661">
    <property type="term" value="F:NADP binding"/>
    <property type="evidence" value="ECO:0007669"/>
    <property type="project" value="InterPro"/>
</dbReference>
<dbReference type="GO" id="GO:0006006">
    <property type="term" value="P:glucose metabolic process"/>
    <property type="evidence" value="ECO:0007669"/>
    <property type="project" value="InterPro"/>
</dbReference>
<dbReference type="GO" id="GO:0006096">
    <property type="term" value="P:glycolytic process"/>
    <property type="evidence" value="ECO:0007669"/>
    <property type="project" value="UniProtKB-UniPathway"/>
</dbReference>
<dbReference type="CDD" id="cd18126">
    <property type="entry name" value="GAPDH_I_C"/>
    <property type="match status" value="1"/>
</dbReference>
<dbReference type="CDD" id="cd05214">
    <property type="entry name" value="GAPDH_I_N"/>
    <property type="match status" value="1"/>
</dbReference>
<dbReference type="FunFam" id="3.30.360.10:FF:000002">
    <property type="entry name" value="Glyceraldehyde-3-phosphate dehydrogenase"/>
    <property type="match status" value="1"/>
</dbReference>
<dbReference type="FunFam" id="3.40.50.720:FF:000001">
    <property type="entry name" value="Glyceraldehyde-3-phosphate dehydrogenase"/>
    <property type="match status" value="1"/>
</dbReference>
<dbReference type="Gene3D" id="3.30.360.10">
    <property type="entry name" value="Dihydrodipicolinate Reductase, domain 2"/>
    <property type="match status" value="1"/>
</dbReference>
<dbReference type="Gene3D" id="3.40.50.720">
    <property type="entry name" value="NAD(P)-binding Rossmann-like Domain"/>
    <property type="match status" value="1"/>
</dbReference>
<dbReference type="InterPro" id="IPR020831">
    <property type="entry name" value="GlycerAld/Erythrose_P_DH"/>
</dbReference>
<dbReference type="InterPro" id="IPR020830">
    <property type="entry name" value="GlycerAld_3-P_DH_AS"/>
</dbReference>
<dbReference type="InterPro" id="IPR020829">
    <property type="entry name" value="GlycerAld_3-P_DH_cat"/>
</dbReference>
<dbReference type="InterPro" id="IPR020828">
    <property type="entry name" value="GlycerAld_3-P_DH_NAD(P)-bd"/>
</dbReference>
<dbReference type="InterPro" id="IPR006424">
    <property type="entry name" value="Glyceraldehyde-3-P_DH_1"/>
</dbReference>
<dbReference type="InterPro" id="IPR036291">
    <property type="entry name" value="NAD(P)-bd_dom_sf"/>
</dbReference>
<dbReference type="NCBIfam" id="TIGR01534">
    <property type="entry name" value="GAPDH-I"/>
    <property type="match status" value="1"/>
</dbReference>
<dbReference type="PANTHER" id="PTHR43148">
    <property type="entry name" value="GLYCERALDEHYDE-3-PHOSPHATE DEHYDROGENASE 2"/>
    <property type="match status" value="1"/>
</dbReference>
<dbReference type="Pfam" id="PF02800">
    <property type="entry name" value="Gp_dh_C"/>
    <property type="match status" value="1"/>
</dbReference>
<dbReference type="Pfam" id="PF00044">
    <property type="entry name" value="Gp_dh_N"/>
    <property type="match status" value="1"/>
</dbReference>
<dbReference type="PIRSF" id="PIRSF000149">
    <property type="entry name" value="GAP_DH"/>
    <property type="match status" value="1"/>
</dbReference>
<dbReference type="PRINTS" id="PR00078">
    <property type="entry name" value="G3PDHDRGNASE"/>
</dbReference>
<dbReference type="SMART" id="SM00846">
    <property type="entry name" value="Gp_dh_N"/>
    <property type="match status" value="1"/>
</dbReference>
<dbReference type="SUPFAM" id="SSF55347">
    <property type="entry name" value="Glyceraldehyde-3-phosphate dehydrogenase-like, C-terminal domain"/>
    <property type="match status" value="1"/>
</dbReference>
<dbReference type="SUPFAM" id="SSF51735">
    <property type="entry name" value="NAD(P)-binding Rossmann-fold domains"/>
    <property type="match status" value="1"/>
</dbReference>
<dbReference type="PROSITE" id="PS00071">
    <property type="entry name" value="GAPDH"/>
    <property type="match status" value="1"/>
</dbReference>